<organism>
    <name type="scientific">Mycobacterium tuberculosis (strain ATCC 25618 / H37Rv)</name>
    <dbReference type="NCBI Taxonomy" id="83332"/>
    <lineage>
        <taxon>Bacteria</taxon>
        <taxon>Bacillati</taxon>
        <taxon>Actinomycetota</taxon>
        <taxon>Actinomycetes</taxon>
        <taxon>Mycobacteriales</taxon>
        <taxon>Mycobacteriaceae</taxon>
        <taxon>Mycobacterium</taxon>
        <taxon>Mycobacterium tuberculosis complex</taxon>
    </lineage>
</organism>
<keyword id="KW-0067">ATP-binding</keyword>
<keyword id="KW-0227">DNA damage</keyword>
<keyword id="KW-0234">DNA repair</keyword>
<keyword id="KW-0238">DNA-binding</keyword>
<keyword id="KW-0460">Magnesium</keyword>
<keyword id="KW-0464">Manganese</keyword>
<keyword id="KW-0547">Nucleotide-binding</keyword>
<keyword id="KW-0548">Nucleotidyltransferase</keyword>
<keyword id="KW-1185">Reference proteome</keyword>
<keyword id="KW-0808">Transferase</keyword>
<evidence type="ECO:0000250" key="1"/>
<evidence type="ECO:0000255" key="2">
    <source>
        <dbReference type="HAMAP-Rule" id="MF_01438"/>
    </source>
</evidence>
<evidence type="ECO:0000255" key="3">
    <source>
        <dbReference type="PROSITE-ProRule" id="PRU01130"/>
    </source>
</evidence>
<evidence type="ECO:0000269" key="4">
    <source>
    </source>
</evidence>
<evidence type="ECO:0000269" key="5">
    <source>
    </source>
</evidence>
<name>DISA_MYCTU</name>
<proteinExistence type="evidence at protein level"/>
<protein>
    <recommendedName>
        <fullName evidence="2">DNA integrity scanning protein DisA</fullName>
    </recommendedName>
    <alternativeName>
        <fullName>Cyclic-di-AMP synthase</fullName>
        <shortName evidence="2">c-di-AMP synthase</shortName>
    </alternativeName>
    <alternativeName>
        <fullName evidence="2">Diadenylate cyclase</fullName>
        <ecNumber evidence="2">2.7.7.85</ecNumber>
    </alternativeName>
</protein>
<feature type="chain" id="PRO_0000424180" description="DNA integrity scanning protein DisA">
    <location>
        <begin position="1"/>
        <end position="358"/>
    </location>
</feature>
<feature type="domain" description="DAC" evidence="3">
    <location>
        <begin position="6"/>
        <end position="144"/>
    </location>
</feature>
<feature type="binding site" evidence="2">
    <location>
        <position position="73"/>
    </location>
    <ligand>
        <name>ATP</name>
        <dbReference type="ChEBI" id="CHEBI:30616"/>
    </ligand>
</feature>
<feature type="binding site" evidence="2">
    <location>
        <position position="91"/>
    </location>
    <ligand>
        <name>ATP</name>
        <dbReference type="ChEBI" id="CHEBI:30616"/>
    </ligand>
</feature>
<feature type="binding site" evidence="2">
    <location>
        <begin position="104"/>
        <end position="108"/>
    </location>
    <ligand>
        <name>ATP</name>
        <dbReference type="ChEBI" id="CHEBI:30616"/>
    </ligand>
</feature>
<feature type="mutagenesis site" description="Retains diadenylate cyclase activity." evidence="4">
    <original>G</original>
    <variation>A</variation>
    <location>
        <position position="73"/>
    </location>
</feature>
<feature type="mutagenesis site" description="Abolishes ATP-binding and diadenylate cyclase activity." evidence="4">
    <original>RHR</original>
    <variation>AAA</variation>
    <location>
        <begin position="105"/>
        <end position="107"/>
    </location>
</feature>
<dbReference type="EC" id="2.7.7.85" evidence="2"/>
<dbReference type="EMBL" id="AL123456">
    <property type="protein sequence ID" value="CCP46409.1"/>
    <property type="molecule type" value="Genomic_DNA"/>
</dbReference>
<dbReference type="PIR" id="C70804">
    <property type="entry name" value="C70804"/>
</dbReference>
<dbReference type="RefSeq" id="NP_218103.1">
    <property type="nucleotide sequence ID" value="NC_000962.3"/>
</dbReference>
<dbReference type="RefSeq" id="WP_003900111.1">
    <property type="nucleotide sequence ID" value="NZ_NVQJ01000014.1"/>
</dbReference>
<dbReference type="SMR" id="P9WNW5"/>
<dbReference type="FunCoup" id="P9WNW5">
    <property type="interactions" value="2"/>
</dbReference>
<dbReference type="STRING" id="83332.Rv3586"/>
<dbReference type="PaxDb" id="83332-Rv3586"/>
<dbReference type="DNASU" id="887485"/>
<dbReference type="GeneID" id="887485"/>
<dbReference type="KEGG" id="mtu:Rv3586"/>
<dbReference type="KEGG" id="mtv:RVBD_3586"/>
<dbReference type="PATRIC" id="fig|83332.111.peg.3996"/>
<dbReference type="TubercuList" id="Rv3586"/>
<dbReference type="eggNOG" id="COG1623">
    <property type="taxonomic scope" value="Bacteria"/>
</dbReference>
<dbReference type="InParanoid" id="P9WNW5"/>
<dbReference type="OrthoDB" id="41841at2"/>
<dbReference type="PhylomeDB" id="P9WNW5"/>
<dbReference type="Proteomes" id="UP000001584">
    <property type="component" value="Chromosome"/>
</dbReference>
<dbReference type="GO" id="GO:0004016">
    <property type="term" value="F:adenylate cyclase activity"/>
    <property type="evidence" value="ECO:0000318"/>
    <property type="project" value="GO_Central"/>
</dbReference>
<dbReference type="GO" id="GO:0005524">
    <property type="term" value="F:ATP binding"/>
    <property type="evidence" value="ECO:0007669"/>
    <property type="project" value="UniProtKB-UniRule"/>
</dbReference>
<dbReference type="GO" id="GO:0106408">
    <property type="term" value="F:diadenylate cyclase activity"/>
    <property type="evidence" value="ECO:0007669"/>
    <property type="project" value="UniProtKB-EC"/>
</dbReference>
<dbReference type="GO" id="GO:0003677">
    <property type="term" value="F:DNA binding"/>
    <property type="evidence" value="ECO:0007669"/>
    <property type="project" value="UniProtKB-UniRule"/>
</dbReference>
<dbReference type="GO" id="GO:0006281">
    <property type="term" value="P:DNA repair"/>
    <property type="evidence" value="ECO:0007669"/>
    <property type="project" value="UniProtKB-UniRule"/>
</dbReference>
<dbReference type="FunFam" id="1.10.150.20:FF:000016">
    <property type="entry name" value="DNA integrity scanning protein DisA"/>
    <property type="match status" value="1"/>
</dbReference>
<dbReference type="FunFam" id="1.20.1260.110:FF:000002">
    <property type="entry name" value="DNA integrity scanning protein DisA"/>
    <property type="match status" value="1"/>
</dbReference>
<dbReference type="FunFam" id="3.40.1700.10:FF:000001">
    <property type="entry name" value="DNA integrity scanning protein DisA"/>
    <property type="match status" value="1"/>
</dbReference>
<dbReference type="Gene3D" id="1.10.150.20">
    <property type="entry name" value="5' to 3' exonuclease, C-terminal subdomain"/>
    <property type="match status" value="1"/>
</dbReference>
<dbReference type="Gene3D" id="1.20.1260.110">
    <property type="entry name" value="DNA integrity scanning linker region"/>
    <property type="match status" value="1"/>
</dbReference>
<dbReference type="Gene3D" id="3.40.1700.10">
    <property type="entry name" value="DNA integrity scanning protein, DisA, N-terminal domain"/>
    <property type="match status" value="1"/>
</dbReference>
<dbReference type="HAMAP" id="MF_01438">
    <property type="entry name" value="DisA"/>
    <property type="match status" value="1"/>
</dbReference>
<dbReference type="InterPro" id="IPR050338">
    <property type="entry name" value="DisA"/>
</dbReference>
<dbReference type="InterPro" id="IPR038331">
    <property type="entry name" value="DisA_sf"/>
</dbReference>
<dbReference type="InterPro" id="IPR036888">
    <property type="entry name" value="DNA_integrity_DisA_N_sf"/>
</dbReference>
<dbReference type="InterPro" id="IPR018906">
    <property type="entry name" value="DNA_integrity_scan_DisA_link"/>
</dbReference>
<dbReference type="InterPro" id="IPR003390">
    <property type="entry name" value="DNA_integrity_scan_DisA_N"/>
</dbReference>
<dbReference type="InterPro" id="IPR023763">
    <property type="entry name" value="DNA_integrity_scanning_protein"/>
</dbReference>
<dbReference type="InterPro" id="IPR010994">
    <property type="entry name" value="RuvA_2-like"/>
</dbReference>
<dbReference type="NCBIfam" id="NF010009">
    <property type="entry name" value="PRK13482.1"/>
    <property type="match status" value="1"/>
</dbReference>
<dbReference type="PANTHER" id="PTHR34185">
    <property type="entry name" value="DIADENYLATE CYCLASE"/>
    <property type="match status" value="1"/>
</dbReference>
<dbReference type="PANTHER" id="PTHR34185:SF3">
    <property type="entry name" value="DNA INTEGRITY SCANNING PROTEIN DISA"/>
    <property type="match status" value="1"/>
</dbReference>
<dbReference type="Pfam" id="PF02457">
    <property type="entry name" value="DAC"/>
    <property type="match status" value="1"/>
</dbReference>
<dbReference type="Pfam" id="PF10635">
    <property type="entry name" value="DisA-linker"/>
    <property type="match status" value="1"/>
</dbReference>
<dbReference type="SUPFAM" id="SSF47781">
    <property type="entry name" value="RuvA domain 2-like"/>
    <property type="match status" value="1"/>
</dbReference>
<dbReference type="SUPFAM" id="SSF143597">
    <property type="entry name" value="YojJ-like"/>
    <property type="match status" value="1"/>
</dbReference>
<dbReference type="PROSITE" id="PS51794">
    <property type="entry name" value="DAC"/>
    <property type="match status" value="1"/>
</dbReference>
<comment type="function">
    <text evidence="2">Participates in a DNA-damage check-point. DisA forms globular foci that rapidly scan along the chromosomes searching for lesions.</text>
</comment>
<comment type="function">
    <text evidence="2 4">Also has diadenylate cyclase activity, catalyzing the condensation of 2 ATP molecules into cyclic di-AMP (c-di-AMP). c-di-AMP likely acts as a signaling molecule that may couple DNA integrity with a cellular process. To a lesser extent, can also use ADP as substrate to produce c-di-AMP. Does not convert GTP to c-di-GMP. Also exhibits residual ATPase and ADPase activities in vitro.</text>
</comment>
<comment type="catalytic activity">
    <reaction evidence="2 4">
        <text>2 ATP = 3',3'-c-di-AMP + 2 diphosphate</text>
        <dbReference type="Rhea" id="RHEA:35655"/>
        <dbReference type="ChEBI" id="CHEBI:30616"/>
        <dbReference type="ChEBI" id="CHEBI:33019"/>
        <dbReference type="ChEBI" id="CHEBI:71500"/>
        <dbReference type="EC" id="2.7.7.85"/>
    </reaction>
</comment>
<comment type="cofactor">
    <cofactor evidence="2 4">
        <name>Mg(2+)</name>
        <dbReference type="ChEBI" id="CHEBI:18420"/>
    </cofactor>
    <cofactor evidence="2 4">
        <name>Mn(2+)</name>
        <dbReference type="ChEBI" id="CHEBI:29035"/>
    </cofactor>
    <cofactor evidence="2 4">
        <name>Co(2+)</name>
        <dbReference type="ChEBI" id="CHEBI:48828"/>
    </cofactor>
    <text evidence="2 4">Magnesium. Can also use Mn(2+), and, to a lesser extent, Co(2+). Cannot use Ni(2+), Ca(2+) and Fe(2+).</text>
</comment>
<comment type="activity regulation">
    <text evidence="1">Diadenylate cyclase activity is inhibited by the interaction with RadA.</text>
</comment>
<comment type="biophysicochemical properties">
    <phDependence>
        <text evidence="4">Is more active at pH 8.0 rather than at pH 7.0 or pH 6.0.</text>
    </phDependence>
</comment>
<comment type="subunit">
    <text evidence="2 4 5">Homooctamer. Interacts with RadA.</text>
</comment>
<comment type="domain">
    <text evidence="4">The N-terminal catalytic domain contributes to tetramerization and the C-terminal domain provides additional dimerization. Both domains are required for full catalytic activity. The C-terminal domain may play a role in stabilizing the active conformation.</text>
</comment>
<comment type="similarity">
    <text evidence="2">Belongs to the DisA family.</text>
</comment>
<reference key="1">
    <citation type="journal article" date="1998" name="Nature">
        <title>Deciphering the biology of Mycobacterium tuberculosis from the complete genome sequence.</title>
        <authorList>
            <person name="Cole S.T."/>
            <person name="Brosch R."/>
            <person name="Parkhill J."/>
            <person name="Garnier T."/>
            <person name="Churcher C.M."/>
            <person name="Harris D.E."/>
            <person name="Gordon S.V."/>
            <person name="Eiglmeier K."/>
            <person name="Gas S."/>
            <person name="Barry C.E. III"/>
            <person name="Tekaia F."/>
            <person name="Badcock K."/>
            <person name="Basham D."/>
            <person name="Brown D."/>
            <person name="Chillingworth T."/>
            <person name="Connor R."/>
            <person name="Davies R.M."/>
            <person name="Devlin K."/>
            <person name="Feltwell T."/>
            <person name="Gentles S."/>
            <person name="Hamlin N."/>
            <person name="Holroyd S."/>
            <person name="Hornsby T."/>
            <person name="Jagels K."/>
            <person name="Krogh A."/>
            <person name="McLean J."/>
            <person name="Moule S."/>
            <person name="Murphy L.D."/>
            <person name="Oliver S."/>
            <person name="Osborne J."/>
            <person name="Quail M.A."/>
            <person name="Rajandream M.A."/>
            <person name="Rogers J."/>
            <person name="Rutter S."/>
            <person name="Seeger K."/>
            <person name="Skelton S."/>
            <person name="Squares S."/>
            <person name="Squares R."/>
            <person name="Sulston J.E."/>
            <person name="Taylor K."/>
            <person name="Whitehead S."/>
            <person name="Barrell B.G."/>
        </authorList>
    </citation>
    <scope>NUCLEOTIDE SEQUENCE [LARGE SCALE GENOMIC DNA]</scope>
    <source>
        <strain>ATCC 25618 / H37Rv</strain>
    </source>
</reference>
<reference key="2">
    <citation type="journal article" date="2011" name="Mol. Cell. Proteomics">
        <title>Proteogenomic analysis of Mycobacterium tuberculosis by high resolution mass spectrometry.</title>
        <authorList>
            <person name="Kelkar D.S."/>
            <person name="Kumar D."/>
            <person name="Kumar P."/>
            <person name="Balakrishnan L."/>
            <person name="Muthusamy B."/>
            <person name="Yadav A.K."/>
            <person name="Shrivastava P."/>
            <person name="Marimuthu A."/>
            <person name="Anand S."/>
            <person name="Sundaram H."/>
            <person name="Kingsbury R."/>
            <person name="Harsha H.C."/>
            <person name="Nair B."/>
            <person name="Prasad T.S."/>
            <person name="Chauhan D.S."/>
            <person name="Katoch K."/>
            <person name="Katoch V.M."/>
            <person name="Kumar P."/>
            <person name="Chaerkady R."/>
            <person name="Ramachandran S."/>
            <person name="Dash D."/>
            <person name="Pandey A."/>
        </authorList>
    </citation>
    <scope>IDENTIFICATION BY MASS SPECTROMETRY [LARGE SCALE ANALYSIS]</scope>
    <source>
        <strain>ATCC 25618 / H37Rv</strain>
    </source>
</reference>
<reference key="3">
    <citation type="journal article" date="2012" name="PLoS ONE">
        <title>Mycobacterium tuberculosis Rv3586 (DacA) is a diadenylate cyclase that converts ATP or ADP into c-di-AMP.</title>
        <authorList>
            <person name="Bai Y."/>
            <person name="Yang J."/>
            <person name="Zhou X."/>
            <person name="Ding X."/>
            <person name="Eisele L.E."/>
            <person name="Bai G."/>
        </authorList>
    </citation>
    <scope>FUNCTION</scope>
    <scope>CATALYTIC ACTIVITY</scope>
    <scope>COFACTOR</scope>
    <scope>SUBSTRATE SPECIFICITY</scope>
    <scope>SUBUNIT</scope>
    <scope>DOMAIN</scope>
    <scope>PH DEPENDENCE</scope>
    <scope>MUTAGENESIS OF GLY-73 AND 105-ARG--ARG-107</scope>
    <source>
        <strain>ATCC 25618 / H37Rv</strain>
    </source>
</reference>
<reference key="4">
    <citation type="journal article" date="2013" name="J. Biol. Chem.">
        <title>Radiation-sensitive gene A (RadA) targets DisA, DNA integrity scanning protein A, to negatively affect cyclic di-AMP synthesis activity in Mycobacterium smegmatis.</title>
        <authorList>
            <person name="Zhang L."/>
            <person name="He Z.G."/>
        </authorList>
    </citation>
    <scope>INTERACTION WITH RADA</scope>
</reference>
<accession>P9WNW5</accession>
<accession>F2GJT2</accession>
<accession>O53571</accession>
<accession>Q7D584</accession>
<gene>
    <name evidence="2" type="primary">disA</name>
    <name type="synonym">dacA</name>
    <name type="ordered locus">Rv3586</name>
</gene>
<sequence>MHAVTRPTLREAVARLAPGTGLRDGLERILRGRTGALIVLGHDENVEAICDGGFSLDVRYAATRLRELCKMDGAVVLSTDGSRIVRANVQLVPDPSIPTDESGTRHRSAERAAIQTGYPVISVSHSMNIVTVYVRGERHVLTDSATILSRANQAIATLERYKTRLDEVSRQLSRAEIEDFVTLRDVMTVVQRLELVRRIGLVIDYDVVELGTDGRQLRLQLDELLGGNDTARELIVRDYHANPEPPSTGQINATLDELDALSDGDLLDFTALAKVFGYPTTTEAQDSTLSPRGYRAMAGIPRLQFAHADLLVRAFGTLQGLLAASAGDLQSVDGIGAMWARHVREGLSQLAESTISDQ</sequence>